<geneLocation type="mitochondrion"/>
<protein>
    <recommendedName>
        <fullName evidence="1">NADH-ubiquinone oxidoreductase chain 3</fullName>
        <ecNumber evidence="1">7.1.1.2</ecNumber>
    </recommendedName>
    <alternativeName>
        <fullName>NADH dehydrogenase subunit 3</fullName>
    </alternativeName>
</protein>
<gene>
    <name evidence="1" type="primary">MT-ND3</name>
    <name type="synonym">MTND3</name>
    <name type="synonym">NADH3</name>
    <name type="synonym">ND3</name>
</gene>
<feature type="chain" id="PRO_0000117739" description="NADH-ubiquinone oxidoreductase chain 3">
    <location>
        <begin position="1"/>
        <end position="115"/>
    </location>
</feature>
<feature type="transmembrane region" description="Helical" evidence="3">
    <location>
        <begin position="3"/>
        <end position="23"/>
    </location>
</feature>
<feature type="transmembrane region" description="Helical" evidence="3">
    <location>
        <begin position="55"/>
        <end position="75"/>
    </location>
</feature>
<feature type="transmembrane region" description="Helical" evidence="3">
    <location>
        <begin position="87"/>
        <end position="107"/>
    </location>
</feature>
<reference key="1">
    <citation type="journal article" date="2002" name="Proc. Natl. Acad. Sci. U.S.A.">
        <title>Mammalian mitogenomic relationships and the root of the eutherian tree.</title>
        <authorList>
            <person name="Arnason U."/>
            <person name="Adegoke J.A."/>
            <person name="Bodin K."/>
            <person name="Born E.W."/>
            <person name="Esa Y.B."/>
            <person name="Gullberg A."/>
            <person name="Nilsson M."/>
            <person name="Short R.V."/>
            <person name="Xu X."/>
            <person name="Janke A."/>
        </authorList>
    </citation>
    <scope>NUCLEOTIDE SEQUENCE [GENOMIC DNA]</scope>
</reference>
<reference key="2">
    <citation type="submission" date="2002-01" db="EMBL/GenBank/DDBJ databases">
        <title>Complete mitochondrial genome of a dugong.</title>
        <authorList>
            <person name="McLenachan P.A."/>
            <person name="Phillips M.J."/>
            <person name="Penny D."/>
        </authorList>
    </citation>
    <scope>NUCLEOTIDE SEQUENCE [GENOMIC DNA]</scope>
</reference>
<dbReference type="EC" id="7.1.1.2" evidence="1"/>
<dbReference type="EMBL" id="AJ421723">
    <property type="protein sequence ID" value="CAD18915.1"/>
    <property type="molecule type" value="Genomic_DNA"/>
</dbReference>
<dbReference type="EMBL" id="AY075116">
    <property type="protein sequence ID" value="AAL79370.1"/>
    <property type="molecule type" value="Genomic_DNA"/>
</dbReference>
<dbReference type="RefSeq" id="NP_536765.1">
    <property type="nucleotide sequence ID" value="NC_003314.1"/>
</dbReference>
<dbReference type="SMR" id="Q8W9M9"/>
<dbReference type="GeneID" id="804495"/>
<dbReference type="CTD" id="4537"/>
<dbReference type="GO" id="GO:0005743">
    <property type="term" value="C:mitochondrial inner membrane"/>
    <property type="evidence" value="ECO:0000250"/>
    <property type="project" value="UniProtKB"/>
</dbReference>
<dbReference type="GO" id="GO:0030964">
    <property type="term" value="C:NADH dehydrogenase complex"/>
    <property type="evidence" value="ECO:0007669"/>
    <property type="project" value="TreeGrafter"/>
</dbReference>
<dbReference type="GO" id="GO:0008137">
    <property type="term" value="F:NADH dehydrogenase (ubiquinone) activity"/>
    <property type="evidence" value="ECO:0000250"/>
    <property type="project" value="UniProtKB"/>
</dbReference>
<dbReference type="GO" id="GO:0006120">
    <property type="term" value="P:mitochondrial electron transport, NADH to ubiquinone"/>
    <property type="evidence" value="ECO:0000250"/>
    <property type="project" value="UniProtKB"/>
</dbReference>
<dbReference type="FunFam" id="1.20.58.1610:FF:000004">
    <property type="entry name" value="NADH-quinone oxidoreductase subunit A"/>
    <property type="match status" value="1"/>
</dbReference>
<dbReference type="Gene3D" id="1.20.58.1610">
    <property type="entry name" value="NADH:ubiquinone/plastoquinone oxidoreductase, chain 3"/>
    <property type="match status" value="1"/>
</dbReference>
<dbReference type="InterPro" id="IPR000440">
    <property type="entry name" value="NADH_UbQ/plastoQ_OxRdtase_su3"/>
</dbReference>
<dbReference type="InterPro" id="IPR038430">
    <property type="entry name" value="NDAH_ubi_oxred_su3_sf"/>
</dbReference>
<dbReference type="PANTHER" id="PTHR11058">
    <property type="entry name" value="NADH-UBIQUINONE OXIDOREDUCTASE CHAIN 3"/>
    <property type="match status" value="1"/>
</dbReference>
<dbReference type="PANTHER" id="PTHR11058:SF9">
    <property type="entry name" value="NADH-UBIQUINONE OXIDOREDUCTASE CHAIN 3"/>
    <property type="match status" value="1"/>
</dbReference>
<dbReference type="Pfam" id="PF00507">
    <property type="entry name" value="Oxidored_q4"/>
    <property type="match status" value="1"/>
</dbReference>
<sequence>MNLMLTLFTNATLASLLILIAFWLPQSYAYAEKVTPYECGFDPMGSARLPFSMKFFLVAITFLLFDLEIALLLPLPWAIQATNLNLVLFMALALITLLALSLAYEWIQKGLEWVE</sequence>
<name>NU3M_DUGDU</name>
<organism>
    <name type="scientific">Dugong dugon</name>
    <name type="common">Dugong</name>
    <name type="synonym">Trichechus dugon</name>
    <dbReference type="NCBI Taxonomy" id="29137"/>
    <lineage>
        <taxon>Eukaryota</taxon>
        <taxon>Metazoa</taxon>
        <taxon>Chordata</taxon>
        <taxon>Craniata</taxon>
        <taxon>Vertebrata</taxon>
        <taxon>Euteleostomi</taxon>
        <taxon>Mammalia</taxon>
        <taxon>Eutheria</taxon>
        <taxon>Afrotheria</taxon>
        <taxon>Sirenia</taxon>
        <taxon>Dugongidae</taxon>
        <taxon>Dugong</taxon>
    </lineage>
</organism>
<proteinExistence type="inferred from homology"/>
<keyword id="KW-0249">Electron transport</keyword>
<keyword id="KW-0472">Membrane</keyword>
<keyword id="KW-0496">Mitochondrion</keyword>
<keyword id="KW-0999">Mitochondrion inner membrane</keyword>
<keyword id="KW-0520">NAD</keyword>
<keyword id="KW-0679">Respiratory chain</keyword>
<keyword id="KW-1278">Translocase</keyword>
<keyword id="KW-0812">Transmembrane</keyword>
<keyword id="KW-1133">Transmembrane helix</keyword>
<keyword id="KW-0813">Transport</keyword>
<keyword id="KW-0830">Ubiquinone</keyword>
<accession>Q8W9M9</accession>
<comment type="function">
    <text evidence="1">Core subunit of the mitochondrial membrane respiratory chain NADH dehydrogenase (Complex I) which catalyzes electron transfer from NADH through the respiratory chain, using ubiquinone as an electron acceptor. Essential for the catalytic activity of complex I.</text>
</comment>
<comment type="catalytic activity">
    <reaction evidence="1">
        <text>a ubiquinone + NADH + 5 H(+)(in) = a ubiquinol + NAD(+) + 4 H(+)(out)</text>
        <dbReference type="Rhea" id="RHEA:29091"/>
        <dbReference type="Rhea" id="RHEA-COMP:9565"/>
        <dbReference type="Rhea" id="RHEA-COMP:9566"/>
        <dbReference type="ChEBI" id="CHEBI:15378"/>
        <dbReference type="ChEBI" id="CHEBI:16389"/>
        <dbReference type="ChEBI" id="CHEBI:17976"/>
        <dbReference type="ChEBI" id="CHEBI:57540"/>
        <dbReference type="ChEBI" id="CHEBI:57945"/>
        <dbReference type="EC" id="7.1.1.2"/>
    </reaction>
</comment>
<comment type="subunit">
    <text evidence="1">Core subunit of respiratory chain NADH dehydrogenase (Complex I) which is composed of 45 different subunits. Interacts with TMEM186. Interacts with TMEM242 (By similarity).</text>
</comment>
<comment type="subcellular location">
    <subcellularLocation>
        <location evidence="2">Mitochondrion inner membrane</location>
        <topology evidence="3">Multi-pass membrane protein</topology>
    </subcellularLocation>
</comment>
<comment type="similarity">
    <text evidence="4">Belongs to the complex I subunit 3 family.</text>
</comment>
<evidence type="ECO:0000250" key="1">
    <source>
        <dbReference type="UniProtKB" id="P03897"/>
    </source>
</evidence>
<evidence type="ECO:0000250" key="2">
    <source>
        <dbReference type="UniProtKB" id="P03898"/>
    </source>
</evidence>
<evidence type="ECO:0000255" key="3"/>
<evidence type="ECO:0000305" key="4"/>